<reference key="1">
    <citation type="journal article" date="2008" name="Genome Res.">
        <title>Comparative genome analysis of Salmonella enteritidis PT4 and Salmonella gallinarum 287/91 provides insights into evolutionary and host adaptation pathways.</title>
        <authorList>
            <person name="Thomson N.R."/>
            <person name="Clayton D.J."/>
            <person name="Windhorst D."/>
            <person name="Vernikos G."/>
            <person name="Davidson S."/>
            <person name="Churcher C."/>
            <person name="Quail M.A."/>
            <person name="Stevens M."/>
            <person name="Jones M.A."/>
            <person name="Watson M."/>
            <person name="Barron A."/>
            <person name="Layton A."/>
            <person name="Pickard D."/>
            <person name="Kingsley R.A."/>
            <person name="Bignell A."/>
            <person name="Clark L."/>
            <person name="Harris B."/>
            <person name="Ormond D."/>
            <person name="Abdellah Z."/>
            <person name="Brooks K."/>
            <person name="Cherevach I."/>
            <person name="Chillingworth T."/>
            <person name="Woodward J."/>
            <person name="Norberczak H."/>
            <person name="Lord A."/>
            <person name="Arrowsmith C."/>
            <person name="Jagels K."/>
            <person name="Moule S."/>
            <person name="Mungall K."/>
            <person name="Saunders M."/>
            <person name="Whitehead S."/>
            <person name="Chabalgoity J.A."/>
            <person name="Maskell D."/>
            <person name="Humphreys T."/>
            <person name="Roberts M."/>
            <person name="Barrow P.A."/>
            <person name="Dougan G."/>
            <person name="Parkhill J."/>
        </authorList>
    </citation>
    <scope>NUCLEOTIDE SEQUENCE [LARGE SCALE GENOMIC DNA]</scope>
    <source>
        <strain>P125109</strain>
    </source>
</reference>
<keyword id="KW-0328">Glycosyltransferase</keyword>
<keyword id="KW-0479">Metal-binding</keyword>
<keyword id="KW-0671">Queuosine biosynthesis</keyword>
<keyword id="KW-0808">Transferase</keyword>
<keyword id="KW-0819">tRNA processing</keyword>
<keyword id="KW-0862">Zinc</keyword>
<feature type="chain" id="PRO_1000097559" description="Queuine tRNA-ribosyltransferase">
    <location>
        <begin position="1"/>
        <end position="375"/>
    </location>
</feature>
<feature type="region of interest" description="RNA binding" evidence="1">
    <location>
        <begin position="245"/>
        <end position="251"/>
    </location>
</feature>
<feature type="region of interest" description="RNA binding; important for wobble base 34 recognition" evidence="1">
    <location>
        <begin position="269"/>
        <end position="273"/>
    </location>
</feature>
<feature type="active site" description="Proton acceptor" evidence="1">
    <location>
        <position position="89"/>
    </location>
</feature>
<feature type="active site" description="Nucleophile" evidence="1">
    <location>
        <position position="264"/>
    </location>
</feature>
<feature type="binding site" evidence="1">
    <location>
        <begin position="89"/>
        <end position="93"/>
    </location>
    <ligand>
        <name>substrate</name>
    </ligand>
</feature>
<feature type="binding site" evidence="1">
    <location>
        <position position="143"/>
    </location>
    <ligand>
        <name>substrate</name>
    </ligand>
</feature>
<feature type="binding site" evidence="1">
    <location>
        <position position="187"/>
    </location>
    <ligand>
        <name>substrate</name>
    </ligand>
</feature>
<feature type="binding site" evidence="1">
    <location>
        <position position="214"/>
    </location>
    <ligand>
        <name>substrate</name>
    </ligand>
</feature>
<feature type="binding site" evidence="1">
    <location>
        <position position="302"/>
    </location>
    <ligand>
        <name>Zn(2+)</name>
        <dbReference type="ChEBI" id="CHEBI:29105"/>
    </ligand>
</feature>
<feature type="binding site" evidence="1">
    <location>
        <position position="304"/>
    </location>
    <ligand>
        <name>Zn(2+)</name>
        <dbReference type="ChEBI" id="CHEBI:29105"/>
    </ligand>
</feature>
<feature type="binding site" evidence="1">
    <location>
        <position position="307"/>
    </location>
    <ligand>
        <name>Zn(2+)</name>
        <dbReference type="ChEBI" id="CHEBI:29105"/>
    </ligand>
</feature>
<feature type="binding site" evidence="1">
    <location>
        <position position="333"/>
    </location>
    <ligand>
        <name>Zn(2+)</name>
        <dbReference type="ChEBI" id="CHEBI:29105"/>
    </ligand>
</feature>
<comment type="function">
    <text evidence="1">Catalyzes the base-exchange of a guanine (G) residue with the queuine precursor 7-aminomethyl-7-deazaguanine (PreQ1) at position 34 (anticodon wobble position) in tRNAs with GU(N) anticodons (tRNA-Asp, -Asn, -His and -Tyr). Catalysis occurs through a double-displacement mechanism. The nucleophile active site attacks the C1' of nucleotide 34 to detach the guanine base from the RNA, forming a covalent enzyme-RNA intermediate. The proton acceptor active site deprotonates the incoming PreQ1, allowing a nucleophilic attack on the C1' of the ribose to form the product. After dissociation, two additional enzymatic reactions on the tRNA convert PreQ1 to queuine (Q), resulting in the hypermodified nucleoside queuosine (7-(((4,5-cis-dihydroxy-2-cyclopenten-1-yl)amino)methyl)-7-deazaguanosine).</text>
</comment>
<comment type="catalytic activity">
    <reaction evidence="1">
        <text>7-aminomethyl-7-carbaguanine + guanosine(34) in tRNA = 7-aminomethyl-7-carbaguanosine(34) in tRNA + guanine</text>
        <dbReference type="Rhea" id="RHEA:24104"/>
        <dbReference type="Rhea" id="RHEA-COMP:10341"/>
        <dbReference type="Rhea" id="RHEA-COMP:10342"/>
        <dbReference type="ChEBI" id="CHEBI:16235"/>
        <dbReference type="ChEBI" id="CHEBI:58703"/>
        <dbReference type="ChEBI" id="CHEBI:74269"/>
        <dbReference type="ChEBI" id="CHEBI:82833"/>
        <dbReference type="EC" id="2.4.2.29"/>
    </reaction>
</comment>
<comment type="cofactor">
    <cofactor evidence="1">
        <name>Zn(2+)</name>
        <dbReference type="ChEBI" id="CHEBI:29105"/>
    </cofactor>
    <text evidence="1">Binds 1 zinc ion per subunit.</text>
</comment>
<comment type="pathway">
    <text evidence="1">tRNA modification; tRNA-queuosine biosynthesis.</text>
</comment>
<comment type="subunit">
    <text evidence="1">Homodimer. Within each dimer, one monomer is responsible for RNA recognition and catalysis, while the other monomer binds to the replacement base PreQ1.</text>
</comment>
<comment type="similarity">
    <text evidence="1">Belongs to the queuine tRNA-ribosyltransferase family.</text>
</comment>
<sequence>MKFELDTTDGRARRGRLVFDRGIVETPAFMPVGTYGTVKGMTPEEVEATGAQIILGNTFHLWLRPGQEIMKLHGDLHDFMQWKGPILTDSGGFQVFSLGDIRKITEQGVHFRNPINGDPIFLDPEKSMEIQYDLGSDIVMIFDECTPYPADWDYAKRSMEMSLRWAKRSRDRFDSLGNKNALFGIIQGSVYEDLRDISVKGLVEIGFDGYAVGGLAVGEPKADMHRILEHVCPQIPADKPRYLMGVGKPEDLVEGVRRGIDMFDCVMPTRNARNGHLFVTDGVVKIRNAKHKSDTSPLDAECDCYTCRNYSRAYLHHLDRCNEILGARLNTIHNLRYYQRLMAGLRKAIEEGKLESFVTEFYQRQGRPVPPLNVD</sequence>
<evidence type="ECO:0000255" key="1">
    <source>
        <dbReference type="HAMAP-Rule" id="MF_00168"/>
    </source>
</evidence>
<organism>
    <name type="scientific">Salmonella enteritidis PT4 (strain P125109)</name>
    <dbReference type="NCBI Taxonomy" id="550537"/>
    <lineage>
        <taxon>Bacteria</taxon>
        <taxon>Pseudomonadati</taxon>
        <taxon>Pseudomonadota</taxon>
        <taxon>Gammaproteobacteria</taxon>
        <taxon>Enterobacterales</taxon>
        <taxon>Enterobacteriaceae</taxon>
        <taxon>Salmonella</taxon>
    </lineage>
</organism>
<protein>
    <recommendedName>
        <fullName evidence="1">Queuine tRNA-ribosyltransferase</fullName>
        <ecNumber evidence="1">2.4.2.29</ecNumber>
    </recommendedName>
    <alternativeName>
        <fullName evidence="1">Guanine insertion enzyme</fullName>
    </alternativeName>
    <alternativeName>
        <fullName evidence="1">tRNA-guanine transglycosylase</fullName>
    </alternativeName>
</protein>
<dbReference type="EC" id="2.4.2.29" evidence="1"/>
<dbReference type="EMBL" id="AM933172">
    <property type="protein sequence ID" value="CAR31974.1"/>
    <property type="molecule type" value="Genomic_DNA"/>
</dbReference>
<dbReference type="RefSeq" id="WP_000667302.1">
    <property type="nucleotide sequence ID" value="NC_011294.1"/>
</dbReference>
<dbReference type="SMR" id="B5QTF4"/>
<dbReference type="KEGG" id="set:SEN0388"/>
<dbReference type="HOGENOM" id="CLU_022060_0_1_6"/>
<dbReference type="UniPathway" id="UPA00392"/>
<dbReference type="Proteomes" id="UP000000613">
    <property type="component" value="Chromosome"/>
</dbReference>
<dbReference type="GO" id="GO:0005829">
    <property type="term" value="C:cytosol"/>
    <property type="evidence" value="ECO:0007669"/>
    <property type="project" value="TreeGrafter"/>
</dbReference>
<dbReference type="GO" id="GO:0046872">
    <property type="term" value="F:metal ion binding"/>
    <property type="evidence" value="ECO:0007669"/>
    <property type="project" value="UniProtKB-KW"/>
</dbReference>
<dbReference type="GO" id="GO:0008479">
    <property type="term" value="F:tRNA-guanosine(34) queuine transglycosylase activity"/>
    <property type="evidence" value="ECO:0007669"/>
    <property type="project" value="UniProtKB-UniRule"/>
</dbReference>
<dbReference type="GO" id="GO:0008616">
    <property type="term" value="P:queuosine biosynthetic process"/>
    <property type="evidence" value="ECO:0007669"/>
    <property type="project" value="UniProtKB-UniRule"/>
</dbReference>
<dbReference type="GO" id="GO:0002099">
    <property type="term" value="P:tRNA wobble guanine modification"/>
    <property type="evidence" value="ECO:0007669"/>
    <property type="project" value="TreeGrafter"/>
</dbReference>
<dbReference type="GO" id="GO:0101030">
    <property type="term" value="P:tRNA-guanine transglycosylation"/>
    <property type="evidence" value="ECO:0007669"/>
    <property type="project" value="InterPro"/>
</dbReference>
<dbReference type="FunFam" id="3.20.20.105:FF:000001">
    <property type="entry name" value="Queuine tRNA-ribosyltransferase"/>
    <property type="match status" value="1"/>
</dbReference>
<dbReference type="Gene3D" id="3.20.20.105">
    <property type="entry name" value="Queuine tRNA-ribosyltransferase-like"/>
    <property type="match status" value="1"/>
</dbReference>
<dbReference type="HAMAP" id="MF_00168">
    <property type="entry name" value="Q_tRNA_Tgt"/>
    <property type="match status" value="1"/>
</dbReference>
<dbReference type="InterPro" id="IPR050076">
    <property type="entry name" value="ArchSynthase1/Queuine_TRR"/>
</dbReference>
<dbReference type="InterPro" id="IPR004803">
    <property type="entry name" value="TGT"/>
</dbReference>
<dbReference type="InterPro" id="IPR036511">
    <property type="entry name" value="TGT-like_sf"/>
</dbReference>
<dbReference type="InterPro" id="IPR002616">
    <property type="entry name" value="tRNA_ribo_trans-like"/>
</dbReference>
<dbReference type="NCBIfam" id="TIGR00430">
    <property type="entry name" value="Q_tRNA_tgt"/>
    <property type="match status" value="1"/>
</dbReference>
<dbReference type="NCBIfam" id="TIGR00449">
    <property type="entry name" value="tgt_general"/>
    <property type="match status" value="1"/>
</dbReference>
<dbReference type="PANTHER" id="PTHR46499">
    <property type="entry name" value="QUEUINE TRNA-RIBOSYLTRANSFERASE"/>
    <property type="match status" value="1"/>
</dbReference>
<dbReference type="PANTHER" id="PTHR46499:SF1">
    <property type="entry name" value="QUEUINE TRNA-RIBOSYLTRANSFERASE"/>
    <property type="match status" value="1"/>
</dbReference>
<dbReference type="Pfam" id="PF01702">
    <property type="entry name" value="TGT"/>
    <property type="match status" value="1"/>
</dbReference>
<dbReference type="SUPFAM" id="SSF51713">
    <property type="entry name" value="tRNA-guanine transglycosylase"/>
    <property type="match status" value="1"/>
</dbReference>
<proteinExistence type="inferred from homology"/>
<gene>
    <name evidence="1" type="primary">tgt</name>
    <name type="ordered locus">SEN0388</name>
</gene>
<accession>B5QTF4</accession>
<name>TGT_SALEP</name>